<accession>Q161S5</accession>
<name>UREF_ROSDO</name>
<protein>
    <recommendedName>
        <fullName evidence="1">Urease accessory protein UreF</fullName>
    </recommendedName>
</protein>
<keyword id="KW-0143">Chaperone</keyword>
<keyword id="KW-0963">Cytoplasm</keyword>
<keyword id="KW-0996">Nickel insertion</keyword>
<keyword id="KW-1185">Reference proteome</keyword>
<reference key="1">
    <citation type="journal article" date="2007" name="J. Bacteriol.">
        <title>The complete genome sequence of Roseobacter denitrificans reveals a mixotrophic rather than photosynthetic metabolism.</title>
        <authorList>
            <person name="Swingley W.D."/>
            <person name="Sadekar S."/>
            <person name="Mastrian S.D."/>
            <person name="Matthies H.J."/>
            <person name="Hao J."/>
            <person name="Ramos H."/>
            <person name="Acharya C.R."/>
            <person name="Conrad A.L."/>
            <person name="Taylor H.L."/>
            <person name="Dejesa L.C."/>
            <person name="Shah M.K."/>
            <person name="O'Huallachain M.E."/>
            <person name="Lince M.T."/>
            <person name="Blankenship R.E."/>
            <person name="Beatty J.T."/>
            <person name="Touchman J.W."/>
        </authorList>
    </citation>
    <scope>NUCLEOTIDE SEQUENCE [LARGE SCALE GENOMIC DNA]</scope>
    <source>
        <strain>ATCC 33942 / OCh 114</strain>
    </source>
</reference>
<proteinExistence type="inferred from homology"/>
<organism>
    <name type="scientific">Roseobacter denitrificans (strain ATCC 33942 / OCh 114)</name>
    <name type="common">Erythrobacter sp. (strain OCh 114)</name>
    <name type="synonym">Roseobacter denitrificans</name>
    <dbReference type="NCBI Taxonomy" id="375451"/>
    <lineage>
        <taxon>Bacteria</taxon>
        <taxon>Pseudomonadati</taxon>
        <taxon>Pseudomonadota</taxon>
        <taxon>Alphaproteobacteria</taxon>
        <taxon>Rhodobacterales</taxon>
        <taxon>Roseobacteraceae</taxon>
        <taxon>Roseobacter</taxon>
    </lineage>
</organism>
<evidence type="ECO:0000255" key="1">
    <source>
        <dbReference type="HAMAP-Rule" id="MF_01385"/>
    </source>
</evidence>
<feature type="chain" id="PRO_0000344173" description="Urease accessory protein UreF">
    <location>
        <begin position="1"/>
        <end position="222"/>
    </location>
</feature>
<dbReference type="EMBL" id="CP000362">
    <property type="protein sequence ID" value="ABG33268.1"/>
    <property type="molecule type" value="Genomic_DNA"/>
</dbReference>
<dbReference type="RefSeq" id="WP_011569879.1">
    <property type="nucleotide sequence ID" value="NC_008209.1"/>
</dbReference>
<dbReference type="SMR" id="Q161S5"/>
<dbReference type="STRING" id="375451.RD1_3804"/>
<dbReference type="KEGG" id="rde:RD1_3804"/>
<dbReference type="eggNOG" id="COG0830">
    <property type="taxonomic scope" value="Bacteria"/>
</dbReference>
<dbReference type="HOGENOM" id="CLU_049215_2_0_5"/>
<dbReference type="Proteomes" id="UP000007029">
    <property type="component" value="Chromosome"/>
</dbReference>
<dbReference type="GO" id="GO:0005737">
    <property type="term" value="C:cytoplasm"/>
    <property type="evidence" value="ECO:0007669"/>
    <property type="project" value="UniProtKB-SubCell"/>
</dbReference>
<dbReference type="GO" id="GO:0016151">
    <property type="term" value="F:nickel cation binding"/>
    <property type="evidence" value="ECO:0007669"/>
    <property type="project" value="UniProtKB-UniRule"/>
</dbReference>
<dbReference type="Gene3D" id="1.10.4190.10">
    <property type="entry name" value="Urease accessory protein UreF"/>
    <property type="match status" value="1"/>
</dbReference>
<dbReference type="HAMAP" id="MF_01385">
    <property type="entry name" value="UreF"/>
    <property type="match status" value="1"/>
</dbReference>
<dbReference type="InterPro" id="IPR002639">
    <property type="entry name" value="UreF"/>
</dbReference>
<dbReference type="InterPro" id="IPR038277">
    <property type="entry name" value="UreF_sf"/>
</dbReference>
<dbReference type="PANTHER" id="PTHR33620">
    <property type="entry name" value="UREASE ACCESSORY PROTEIN F"/>
    <property type="match status" value="1"/>
</dbReference>
<dbReference type="PANTHER" id="PTHR33620:SF1">
    <property type="entry name" value="UREASE ACCESSORY PROTEIN F"/>
    <property type="match status" value="1"/>
</dbReference>
<dbReference type="Pfam" id="PF01730">
    <property type="entry name" value="UreF"/>
    <property type="match status" value="1"/>
</dbReference>
<dbReference type="PIRSF" id="PIRSF009467">
    <property type="entry name" value="Ureas_acces_UreF"/>
    <property type="match status" value="1"/>
</dbReference>
<gene>
    <name evidence="1" type="primary">ureF</name>
    <name type="ordered locus">RD1_3804</name>
</gene>
<sequence length="222" mass="23718">MTIHTSRIIMSTDAFLTLTQWLSPGFPVGAYAYSHGLEQVIDCGDMRDAKALQDWVEDILEHGSGTSDGILLAASYKALPEDVSRIDAIARAFASSAERVTETVDQGAAFAKAVDAIWATDLGQLCYPVAVGRAACAQGLPLDLTLEIYTHAFAANLVSAAVRLVPLGQTEGQAVLAALAPLIRQVARRCHDAGIDDLTTACMALDIAAMHHETQYSKVFRT</sequence>
<comment type="function">
    <text evidence="1">Required for maturation of urease via the functional incorporation of the urease nickel metallocenter.</text>
</comment>
<comment type="subunit">
    <text evidence="1">UreD, UreF and UreG form a complex that acts as a GTP-hydrolysis-dependent molecular chaperone, activating the urease apoprotein by helping to assemble the nickel containing metallocenter of UreC. The UreE protein probably delivers the nickel.</text>
</comment>
<comment type="subcellular location">
    <subcellularLocation>
        <location evidence="1">Cytoplasm</location>
    </subcellularLocation>
</comment>
<comment type="similarity">
    <text evidence="1">Belongs to the UreF family.</text>
</comment>